<sequence>MEKVPMTVAGYQTLDEELKRLKTVERPAVIAAIAEARSHGDLSENAEYHAAKERQGWIEGQIAEIEDKIARAQVIDVTKLSGKQVKFGATVSVVDEDTEEEARYQIVGDHEADVKSGRISLSSPLSRAMIGKEVGEVVEVNTPGGVKAYEILKVEWL</sequence>
<name>GREA_CAUVN</name>
<dbReference type="EMBL" id="CP001340">
    <property type="protein sequence ID" value="ACL96406.1"/>
    <property type="molecule type" value="Genomic_DNA"/>
</dbReference>
<dbReference type="RefSeq" id="WP_010920688.1">
    <property type="nucleotide sequence ID" value="NC_011916.1"/>
</dbReference>
<dbReference type="RefSeq" id="YP_002518314.1">
    <property type="nucleotide sequence ID" value="NC_011916.1"/>
</dbReference>
<dbReference type="SMR" id="B8H1V7"/>
<dbReference type="GeneID" id="7331372"/>
<dbReference type="KEGG" id="ccs:CCNA_02941"/>
<dbReference type="PATRIC" id="fig|565050.3.peg.2867"/>
<dbReference type="HOGENOM" id="CLU_101379_2_0_5"/>
<dbReference type="OrthoDB" id="9808774at2"/>
<dbReference type="PhylomeDB" id="B8H1V7"/>
<dbReference type="Proteomes" id="UP000001364">
    <property type="component" value="Chromosome"/>
</dbReference>
<dbReference type="GO" id="GO:0003677">
    <property type="term" value="F:DNA binding"/>
    <property type="evidence" value="ECO:0007669"/>
    <property type="project" value="UniProtKB-UniRule"/>
</dbReference>
<dbReference type="GO" id="GO:0070063">
    <property type="term" value="F:RNA polymerase binding"/>
    <property type="evidence" value="ECO:0007669"/>
    <property type="project" value="InterPro"/>
</dbReference>
<dbReference type="GO" id="GO:0006354">
    <property type="term" value="P:DNA-templated transcription elongation"/>
    <property type="evidence" value="ECO:0007669"/>
    <property type="project" value="TreeGrafter"/>
</dbReference>
<dbReference type="GO" id="GO:0032784">
    <property type="term" value="P:regulation of DNA-templated transcription elongation"/>
    <property type="evidence" value="ECO:0007669"/>
    <property type="project" value="UniProtKB-UniRule"/>
</dbReference>
<dbReference type="FunFam" id="1.10.287.180:FF:000001">
    <property type="entry name" value="Transcription elongation factor GreA"/>
    <property type="match status" value="1"/>
</dbReference>
<dbReference type="FunFam" id="3.10.50.30:FF:000001">
    <property type="entry name" value="Transcription elongation factor GreA"/>
    <property type="match status" value="1"/>
</dbReference>
<dbReference type="Gene3D" id="3.10.50.30">
    <property type="entry name" value="Transcription elongation factor, GreA/GreB, C-terminal domain"/>
    <property type="match status" value="1"/>
</dbReference>
<dbReference type="Gene3D" id="1.10.287.180">
    <property type="entry name" value="Transcription elongation factor, GreA/GreB, N-terminal domain"/>
    <property type="match status" value="1"/>
</dbReference>
<dbReference type="HAMAP" id="MF_00105">
    <property type="entry name" value="GreA_GreB"/>
    <property type="match status" value="1"/>
</dbReference>
<dbReference type="InterPro" id="IPR036953">
    <property type="entry name" value="GreA/GreB_C_sf"/>
</dbReference>
<dbReference type="InterPro" id="IPR018151">
    <property type="entry name" value="TF_GreA/GreB_CS"/>
</dbReference>
<dbReference type="InterPro" id="IPR006359">
    <property type="entry name" value="Tscrpt_elong_fac_GreA"/>
</dbReference>
<dbReference type="InterPro" id="IPR028624">
    <property type="entry name" value="Tscrpt_elong_fac_GreA/B"/>
</dbReference>
<dbReference type="InterPro" id="IPR001437">
    <property type="entry name" value="Tscrpt_elong_fac_GreA/B_C"/>
</dbReference>
<dbReference type="InterPro" id="IPR023459">
    <property type="entry name" value="Tscrpt_elong_fac_GreA/B_fam"/>
</dbReference>
<dbReference type="InterPro" id="IPR022691">
    <property type="entry name" value="Tscrpt_elong_fac_GreA/B_N"/>
</dbReference>
<dbReference type="InterPro" id="IPR036805">
    <property type="entry name" value="Tscrpt_elong_fac_GreA/B_N_sf"/>
</dbReference>
<dbReference type="NCBIfam" id="TIGR01462">
    <property type="entry name" value="greA"/>
    <property type="match status" value="1"/>
</dbReference>
<dbReference type="NCBIfam" id="NF001261">
    <property type="entry name" value="PRK00226.1-2"/>
    <property type="match status" value="1"/>
</dbReference>
<dbReference type="NCBIfam" id="NF001263">
    <property type="entry name" value="PRK00226.1-4"/>
    <property type="match status" value="1"/>
</dbReference>
<dbReference type="NCBIfam" id="NF001264">
    <property type="entry name" value="PRK00226.1-5"/>
    <property type="match status" value="1"/>
</dbReference>
<dbReference type="PANTHER" id="PTHR30437">
    <property type="entry name" value="TRANSCRIPTION ELONGATION FACTOR GREA"/>
    <property type="match status" value="1"/>
</dbReference>
<dbReference type="PANTHER" id="PTHR30437:SF4">
    <property type="entry name" value="TRANSCRIPTION ELONGATION FACTOR GREA"/>
    <property type="match status" value="1"/>
</dbReference>
<dbReference type="Pfam" id="PF01272">
    <property type="entry name" value="GreA_GreB"/>
    <property type="match status" value="1"/>
</dbReference>
<dbReference type="Pfam" id="PF03449">
    <property type="entry name" value="GreA_GreB_N"/>
    <property type="match status" value="1"/>
</dbReference>
<dbReference type="PIRSF" id="PIRSF006092">
    <property type="entry name" value="GreA_GreB"/>
    <property type="match status" value="1"/>
</dbReference>
<dbReference type="SUPFAM" id="SSF54534">
    <property type="entry name" value="FKBP-like"/>
    <property type="match status" value="1"/>
</dbReference>
<dbReference type="SUPFAM" id="SSF46557">
    <property type="entry name" value="GreA transcript cleavage protein, N-terminal domain"/>
    <property type="match status" value="1"/>
</dbReference>
<dbReference type="PROSITE" id="PS00829">
    <property type="entry name" value="GREAB_1"/>
    <property type="match status" value="1"/>
</dbReference>
<feature type="chain" id="PRO_1000118953" description="Transcription elongation factor GreA">
    <location>
        <begin position="1"/>
        <end position="157"/>
    </location>
</feature>
<accession>B8H1V7</accession>
<reference key="1">
    <citation type="journal article" date="2010" name="J. Bacteriol.">
        <title>The genetic basis of laboratory adaptation in Caulobacter crescentus.</title>
        <authorList>
            <person name="Marks M.E."/>
            <person name="Castro-Rojas C.M."/>
            <person name="Teiling C."/>
            <person name="Du L."/>
            <person name="Kapatral V."/>
            <person name="Walunas T.L."/>
            <person name="Crosson S."/>
        </authorList>
    </citation>
    <scope>NUCLEOTIDE SEQUENCE [LARGE SCALE GENOMIC DNA]</scope>
    <source>
        <strain>NA1000 / CB15N</strain>
    </source>
</reference>
<protein>
    <recommendedName>
        <fullName evidence="1">Transcription elongation factor GreA</fullName>
    </recommendedName>
    <alternativeName>
        <fullName evidence="1">Transcript cleavage factor GreA</fullName>
    </alternativeName>
</protein>
<keyword id="KW-0238">DNA-binding</keyword>
<keyword id="KW-1185">Reference proteome</keyword>
<keyword id="KW-0804">Transcription</keyword>
<keyword id="KW-0805">Transcription regulation</keyword>
<organism>
    <name type="scientific">Caulobacter vibrioides (strain NA1000 / CB15N)</name>
    <name type="common">Caulobacter crescentus</name>
    <dbReference type="NCBI Taxonomy" id="565050"/>
    <lineage>
        <taxon>Bacteria</taxon>
        <taxon>Pseudomonadati</taxon>
        <taxon>Pseudomonadota</taxon>
        <taxon>Alphaproteobacteria</taxon>
        <taxon>Caulobacterales</taxon>
        <taxon>Caulobacteraceae</taxon>
        <taxon>Caulobacter</taxon>
    </lineage>
</organism>
<proteinExistence type="inferred from homology"/>
<gene>
    <name evidence="1" type="primary">greA</name>
    <name type="ordered locus">CCNA_02941</name>
</gene>
<comment type="function">
    <text evidence="1">Necessary for efficient RNA polymerase transcription elongation past template-encoded arresting sites. The arresting sites in DNA have the property of trapping a certain fraction of elongating RNA polymerases that pass through, resulting in locked ternary complexes. Cleavage of the nascent transcript by cleavage factors such as GreA or GreB allows the resumption of elongation from the new 3'terminus. GreA releases sequences of 2 to 3 nucleotides.</text>
</comment>
<comment type="similarity">
    <text evidence="1">Belongs to the GreA/GreB family.</text>
</comment>
<evidence type="ECO:0000255" key="1">
    <source>
        <dbReference type="HAMAP-Rule" id="MF_00105"/>
    </source>
</evidence>